<keyword id="KW-0808">Transferase</keyword>
<keyword id="KW-0819">tRNA processing</keyword>
<name>CMOB_SALNS</name>
<comment type="function">
    <text evidence="1">Catalyzes carboxymethyl transfer from carboxy-S-adenosyl-L-methionine (Cx-SAM) to 5-hydroxyuridine (ho5U) to form 5-carboxymethoxyuridine (cmo5U) at position 34 in tRNAs.</text>
</comment>
<comment type="catalytic activity">
    <reaction evidence="1">
        <text>carboxy-S-adenosyl-L-methionine + 5-hydroxyuridine(34) in tRNA = 5-carboxymethoxyuridine(34) in tRNA + S-adenosyl-L-homocysteine + H(+)</text>
        <dbReference type="Rhea" id="RHEA:52848"/>
        <dbReference type="Rhea" id="RHEA-COMP:13381"/>
        <dbReference type="Rhea" id="RHEA-COMP:13383"/>
        <dbReference type="ChEBI" id="CHEBI:15378"/>
        <dbReference type="ChEBI" id="CHEBI:57856"/>
        <dbReference type="ChEBI" id="CHEBI:134278"/>
        <dbReference type="ChEBI" id="CHEBI:136877"/>
        <dbReference type="ChEBI" id="CHEBI:136879"/>
    </reaction>
</comment>
<comment type="subunit">
    <text evidence="1">Homotetramer.</text>
</comment>
<comment type="similarity">
    <text evidence="1">Belongs to the class I-like SAM-binding methyltransferase superfamily. CmoB family.</text>
</comment>
<evidence type="ECO:0000255" key="1">
    <source>
        <dbReference type="HAMAP-Rule" id="MF_01590"/>
    </source>
</evidence>
<proteinExistence type="inferred from homology"/>
<sequence>MIEFGNFYQLIAKNHLSHWLETLPAQIAAWQREQQHGLFKQWSNAVEFLPEMTPWRLDLLHSVTAESETPLSEGQLKRIDTLLRNLMPWRKGPFSLYGVDIDTEWRSDWKWDRVLPHLSDLTGRTILDVGCGSGYHLWRMIGAGAHLAVGIDPTQLFLCQFEAVRKLLGNDQRAHLLPLGIEQLPALKAFDTVFSMGVLYHRRSPLEHLWQLKDQLVNEGELVLETLVVDGDENTVLVPGDRYAQMRNVYFIPSAPALKKWLEKCGFIDVRIADVCVTTTEEQRRTEWMVTESLADFLDPNDRSKTVEGYPAPQRAVLIARKP</sequence>
<gene>
    <name evidence="1" type="primary">cmoB</name>
    <name type="ordered locus">SNSL254_A2065</name>
</gene>
<reference key="1">
    <citation type="journal article" date="2011" name="J. Bacteriol.">
        <title>Comparative genomics of 28 Salmonella enterica isolates: evidence for CRISPR-mediated adaptive sublineage evolution.</title>
        <authorList>
            <person name="Fricke W.F."/>
            <person name="Mammel M.K."/>
            <person name="McDermott P.F."/>
            <person name="Tartera C."/>
            <person name="White D.G."/>
            <person name="Leclerc J.E."/>
            <person name="Ravel J."/>
            <person name="Cebula T.A."/>
        </authorList>
    </citation>
    <scope>NUCLEOTIDE SEQUENCE [LARGE SCALE GENOMIC DNA]</scope>
    <source>
        <strain>SL254</strain>
    </source>
</reference>
<protein>
    <recommendedName>
        <fullName evidence="1">tRNA U34 carboxymethyltransferase</fullName>
        <ecNumber evidence="1">2.5.1.-</ecNumber>
    </recommendedName>
</protein>
<organism>
    <name type="scientific">Salmonella newport (strain SL254)</name>
    <dbReference type="NCBI Taxonomy" id="423368"/>
    <lineage>
        <taxon>Bacteria</taxon>
        <taxon>Pseudomonadati</taxon>
        <taxon>Pseudomonadota</taxon>
        <taxon>Gammaproteobacteria</taxon>
        <taxon>Enterobacterales</taxon>
        <taxon>Enterobacteriaceae</taxon>
        <taxon>Salmonella</taxon>
    </lineage>
</organism>
<accession>B4SVF6</accession>
<feature type="chain" id="PRO_1000201309" description="tRNA U34 carboxymethyltransferase">
    <location>
        <begin position="1"/>
        <end position="323"/>
    </location>
</feature>
<feature type="binding site" evidence="1">
    <location>
        <position position="91"/>
    </location>
    <ligand>
        <name>carboxy-S-adenosyl-L-methionine</name>
        <dbReference type="ChEBI" id="CHEBI:134278"/>
    </ligand>
</feature>
<feature type="binding site" evidence="1">
    <location>
        <position position="105"/>
    </location>
    <ligand>
        <name>carboxy-S-adenosyl-L-methionine</name>
        <dbReference type="ChEBI" id="CHEBI:134278"/>
    </ligand>
</feature>
<feature type="binding site" evidence="1">
    <location>
        <position position="110"/>
    </location>
    <ligand>
        <name>carboxy-S-adenosyl-L-methionine</name>
        <dbReference type="ChEBI" id="CHEBI:134278"/>
    </ligand>
</feature>
<feature type="binding site" evidence="1">
    <location>
        <position position="130"/>
    </location>
    <ligand>
        <name>carboxy-S-adenosyl-L-methionine</name>
        <dbReference type="ChEBI" id="CHEBI:134278"/>
    </ligand>
</feature>
<feature type="binding site" evidence="1">
    <location>
        <begin position="152"/>
        <end position="154"/>
    </location>
    <ligand>
        <name>carboxy-S-adenosyl-L-methionine</name>
        <dbReference type="ChEBI" id="CHEBI:134278"/>
    </ligand>
</feature>
<feature type="binding site" evidence="1">
    <location>
        <begin position="181"/>
        <end position="182"/>
    </location>
    <ligand>
        <name>carboxy-S-adenosyl-L-methionine</name>
        <dbReference type="ChEBI" id="CHEBI:134278"/>
    </ligand>
</feature>
<feature type="binding site" evidence="1">
    <location>
        <position position="196"/>
    </location>
    <ligand>
        <name>carboxy-S-adenosyl-L-methionine</name>
        <dbReference type="ChEBI" id="CHEBI:134278"/>
    </ligand>
</feature>
<feature type="binding site" evidence="1">
    <location>
        <position position="200"/>
    </location>
    <ligand>
        <name>carboxy-S-adenosyl-L-methionine</name>
        <dbReference type="ChEBI" id="CHEBI:134278"/>
    </ligand>
</feature>
<feature type="binding site" evidence="1">
    <location>
        <position position="315"/>
    </location>
    <ligand>
        <name>carboxy-S-adenosyl-L-methionine</name>
        <dbReference type="ChEBI" id="CHEBI:134278"/>
    </ligand>
</feature>
<dbReference type="EC" id="2.5.1.-" evidence="1"/>
<dbReference type="EMBL" id="CP001113">
    <property type="protein sequence ID" value="ACF62979.1"/>
    <property type="molecule type" value="Genomic_DNA"/>
</dbReference>
<dbReference type="RefSeq" id="WP_000569035.1">
    <property type="nucleotide sequence ID" value="NZ_CCMR01000003.1"/>
</dbReference>
<dbReference type="SMR" id="B4SVF6"/>
<dbReference type="KEGG" id="see:SNSL254_A2065"/>
<dbReference type="HOGENOM" id="CLU_052665_0_0_6"/>
<dbReference type="Proteomes" id="UP000008824">
    <property type="component" value="Chromosome"/>
</dbReference>
<dbReference type="GO" id="GO:0008168">
    <property type="term" value="F:methyltransferase activity"/>
    <property type="evidence" value="ECO:0007669"/>
    <property type="project" value="TreeGrafter"/>
</dbReference>
<dbReference type="GO" id="GO:0016765">
    <property type="term" value="F:transferase activity, transferring alkyl or aryl (other than methyl) groups"/>
    <property type="evidence" value="ECO:0007669"/>
    <property type="project" value="UniProtKB-UniRule"/>
</dbReference>
<dbReference type="GO" id="GO:0002098">
    <property type="term" value="P:tRNA wobble uridine modification"/>
    <property type="evidence" value="ECO:0007669"/>
    <property type="project" value="InterPro"/>
</dbReference>
<dbReference type="CDD" id="cd02440">
    <property type="entry name" value="AdoMet_MTases"/>
    <property type="match status" value="1"/>
</dbReference>
<dbReference type="FunFam" id="3.40.50.150:FF:000080">
    <property type="entry name" value="tRNA U34 carboxymethyltransferase"/>
    <property type="match status" value="1"/>
</dbReference>
<dbReference type="Gene3D" id="3.40.50.150">
    <property type="entry name" value="Vaccinia Virus protein VP39"/>
    <property type="match status" value="1"/>
</dbReference>
<dbReference type="HAMAP" id="MF_01590">
    <property type="entry name" value="tRNA_carboxymethyltr_CmoB"/>
    <property type="match status" value="1"/>
</dbReference>
<dbReference type="InterPro" id="IPR010017">
    <property type="entry name" value="CmoB"/>
</dbReference>
<dbReference type="InterPro" id="IPR027555">
    <property type="entry name" value="Mo5U34_MeTrfas-like"/>
</dbReference>
<dbReference type="InterPro" id="IPR029063">
    <property type="entry name" value="SAM-dependent_MTases_sf"/>
</dbReference>
<dbReference type="NCBIfam" id="NF011650">
    <property type="entry name" value="PRK15068.1"/>
    <property type="match status" value="1"/>
</dbReference>
<dbReference type="NCBIfam" id="TIGR00452">
    <property type="entry name" value="tRNA 5-methoxyuridine(34)/uridine 5-oxyacetic acid(34) synthase CmoB"/>
    <property type="match status" value="1"/>
</dbReference>
<dbReference type="PANTHER" id="PTHR43464">
    <property type="entry name" value="METHYLTRANSFERASE"/>
    <property type="match status" value="1"/>
</dbReference>
<dbReference type="PANTHER" id="PTHR43464:SF95">
    <property type="entry name" value="TRNA U34 CARBOXYMETHYLTRANSFERASE"/>
    <property type="match status" value="1"/>
</dbReference>
<dbReference type="Pfam" id="PF08003">
    <property type="entry name" value="Methyltransf_9"/>
    <property type="match status" value="1"/>
</dbReference>
<dbReference type="SUPFAM" id="SSF53335">
    <property type="entry name" value="S-adenosyl-L-methionine-dependent methyltransferases"/>
    <property type="match status" value="1"/>
</dbReference>